<protein>
    <recommendedName>
        <fullName evidence="1">ATP synthase subunit c, chloroplastic</fullName>
    </recommendedName>
    <alternativeName>
        <fullName evidence="1">ATP synthase F(0) sector subunit c</fullName>
    </alternativeName>
    <alternativeName>
        <fullName evidence="1">ATPase subunit III</fullName>
    </alternativeName>
    <alternativeName>
        <fullName evidence="1">F-type ATPase subunit c</fullName>
        <shortName evidence="1">F-ATPase subunit c</shortName>
    </alternativeName>
    <alternativeName>
        <fullName evidence="1">Lipid-binding protein</fullName>
    </alternativeName>
</protein>
<accession>Q0G9N2</accession>
<organism>
    <name type="scientific">Liriodendron tulipifera</name>
    <name type="common">Tuliptree</name>
    <name type="synonym">Tulip poplar</name>
    <dbReference type="NCBI Taxonomy" id="3415"/>
    <lineage>
        <taxon>Eukaryota</taxon>
        <taxon>Viridiplantae</taxon>
        <taxon>Streptophyta</taxon>
        <taxon>Embryophyta</taxon>
        <taxon>Tracheophyta</taxon>
        <taxon>Spermatophyta</taxon>
        <taxon>Magnoliopsida</taxon>
        <taxon>Magnoliidae</taxon>
        <taxon>Magnoliales</taxon>
        <taxon>Magnoliaceae</taxon>
        <taxon>Liriodendron</taxon>
    </lineage>
</organism>
<gene>
    <name evidence="1" type="primary">atpH</name>
</gene>
<keyword id="KW-0066">ATP synthesis</keyword>
<keyword id="KW-0138">CF(0)</keyword>
<keyword id="KW-0150">Chloroplast</keyword>
<keyword id="KW-0375">Hydrogen ion transport</keyword>
<keyword id="KW-0406">Ion transport</keyword>
<keyword id="KW-0446">Lipid-binding</keyword>
<keyword id="KW-0472">Membrane</keyword>
<keyword id="KW-0934">Plastid</keyword>
<keyword id="KW-0793">Thylakoid</keyword>
<keyword id="KW-0812">Transmembrane</keyword>
<keyword id="KW-1133">Transmembrane helix</keyword>
<keyword id="KW-0813">Transport</keyword>
<sequence>MNPLISAASVIAAGLAVGLASIGPGVGQGTAAGQAVEGIARQPEAEGKIRGTLLLSLAFMEALTIYGLVVALALLFANPFV</sequence>
<geneLocation type="chloroplast"/>
<dbReference type="EMBL" id="DQ899947">
    <property type="protein sequence ID" value="ABI32496.1"/>
    <property type="molecule type" value="Genomic_DNA"/>
</dbReference>
<dbReference type="RefSeq" id="YP_740189.1">
    <property type="nucleotide sequence ID" value="NC_008326.1"/>
</dbReference>
<dbReference type="SMR" id="Q0G9N2"/>
<dbReference type="GeneID" id="4266597"/>
<dbReference type="GO" id="GO:0009535">
    <property type="term" value="C:chloroplast thylakoid membrane"/>
    <property type="evidence" value="ECO:0007669"/>
    <property type="project" value="UniProtKB-SubCell"/>
</dbReference>
<dbReference type="GO" id="GO:0045259">
    <property type="term" value="C:proton-transporting ATP synthase complex"/>
    <property type="evidence" value="ECO:0007669"/>
    <property type="project" value="UniProtKB-KW"/>
</dbReference>
<dbReference type="GO" id="GO:0033177">
    <property type="term" value="C:proton-transporting two-sector ATPase complex, proton-transporting domain"/>
    <property type="evidence" value="ECO:0007669"/>
    <property type="project" value="InterPro"/>
</dbReference>
<dbReference type="GO" id="GO:0008289">
    <property type="term" value="F:lipid binding"/>
    <property type="evidence" value="ECO:0007669"/>
    <property type="project" value="UniProtKB-KW"/>
</dbReference>
<dbReference type="GO" id="GO:0046933">
    <property type="term" value="F:proton-transporting ATP synthase activity, rotational mechanism"/>
    <property type="evidence" value="ECO:0007669"/>
    <property type="project" value="UniProtKB-UniRule"/>
</dbReference>
<dbReference type="CDD" id="cd18183">
    <property type="entry name" value="ATP-synt_Fo_c_ATPH"/>
    <property type="match status" value="1"/>
</dbReference>
<dbReference type="FunFam" id="1.20.20.10:FF:000001">
    <property type="entry name" value="ATP synthase subunit c, chloroplastic"/>
    <property type="match status" value="1"/>
</dbReference>
<dbReference type="Gene3D" id="1.20.20.10">
    <property type="entry name" value="F1F0 ATP synthase subunit C"/>
    <property type="match status" value="1"/>
</dbReference>
<dbReference type="HAMAP" id="MF_01396">
    <property type="entry name" value="ATP_synth_c_bact"/>
    <property type="match status" value="1"/>
</dbReference>
<dbReference type="InterPro" id="IPR005953">
    <property type="entry name" value="ATP_synth_csu_bac/chlpt"/>
</dbReference>
<dbReference type="InterPro" id="IPR000454">
    <property type="entry name" value="ATP_synth_F0_csu"/>
</dbReference>
<dbReference type="InterPro" id="IPR020537">
    <property type="entry name" value="ATP_synth_F0_csu_DDCD_BS"/>
</dbReference>
<dbReference type="InterPro" id="IPR038662">
    <property type="entry name" value="ATP_synth_F0_csu_sf"/>
</dbReference>
<dbReference type="InterPro" id="IPR002379">
    <property type="entry name" value="ATPase_proteolipid_c-like_dom"/>
</dbReference>
<dbReference type="InterPro" id="IPR035921">
    <property type="entry name" value="F/V-ATP_Csub_sf"/>
</dbReference>
<dbReference type="NCBIfam" id="TIGR01260">
    <property type="entry name" value="ATP_synt_c"/>
    <property type="match status" value="1"/>
</dbReference>
<dbReference type="NCBIfam" id="NF005608">
    <property type="entry name" value="PRK07354.1"/>
    <property type="match status" value="1"/>
</dbReference>
<dbReference type="PANTHER" id="PTHR10031">
    <property type="entry name" value="ATP SYNTHASE LIPID-BINDING PROTEIN, MITOCHONDRIAL"/>
    <property type="match status" value="1"/>
</dbReference>
<dbReference type="PANTHER" id="PTHR10031:SF0">
    <property type="entry name" value="ATPASE PROTEIN 9"/>
    <property type="match status" value="1"/>
</dbReference>
<dbReference type="Pfam" id="PF00137">
    <property type="entry name" value="ATP-synt_C"/>
    <property type="match status" value="1"/>
</dbReference>
<dbReference type="PRINTS" id="PR00124">
    <property type="entry name" value="ATPASEC"/>
</dbReference>
<dbReference type="SUPFAM" id="SSF81333">
    <property type="entry name" value="F1F0 ATP synthase subunit C"/>
    <property type="match status" value="1"/>
</dbReference>
<dbReference type="PROSITE" id="PS00605">
    <property type="entry name" value="ATPASE_C"/>
    <property type="match status" value="1"/>
</dbReference>
<reference key="1">
    <citation type="journal article" date="2006" name="BMC Evol. Biol.">
        <title>Complete plastid genome sequences of Drimys, Liriodendron, and Piper: implications for the phylogenetic relationships of magnoliids.</title>
        <authorList>
            <person name="Cai Z."/>
            <person name="Penaflor C."/>
            <person name="Kuehl J.V."/>
            <person name="Leebens-Mack J."/>
            <person name="Carlson J.E."/>
            <person name="dePamphilis C.W."/>
            <person name="Boore J.L."/>
            <person name="Jansen R.K."/>
        </authorList>
    </citation>
    <scope>NUCLEOTIDE SEQUENCE [LARGE SCALE GENOMIC DNA]</scope>
</reference>
<proteinExistence type="inferred from homology"/>
<evidence type="ECO:0000255" key="1">
    <source>
        <dbReference type="HAMAP-Rule" id="MF_01396"/>
    </source>
</evidence>
<name>ATPH_LIRTU</name>
<feature type="chain" id="PRO_0000362931" description="ATP synthase subunit c, chloroplastic">
    <location>
        <begin position="1"/>
        <end position="81"/>
    </location>
</feature>
<feature type="transmembrane region" description="Helical" evidence="1">
    <location>
        <begin position="3"/>
        <end position="23"/>
    </location>
</feature>
<feature type="transmembrane region" description="Helical" evidence="1">
    <location>
        <begin position="57"/>
        <end position="77"/>
    </location>
</feature>
<feature type="site" description="Reversibly protonated during proton transport" evidence="1">
    <location>
        <position position="61"/>
    </location>
</feature>
<comment type="function">
    <text evidence="1">F(1)F(0) ATP synthase produces ATP from ADP in the presence of a proton or sodium gradient. F-type ATPases consist of two structural domains, F(1) containing the extramembraneous catalytic core and F(0) containing the membrane proton channel, linked together by a central stalk and a peripheral stalk. During catalysis, ATP synthesis in the catalytic domain of F(1) is coupled via a rotary mechanism of the central stalk subunits to proton translocation.</text>
</comment>
<comment type="function">
    <text evidence="1">Key component of the F(0) channel; it plays a direct role in translocation across the membrane. A homomeric c-ring of between 10-14 subunits forms the central stalk rotor element with the F(1) delta and epsilon subunits.</text>
</comment>
<comment type="subunit">
    <text evidence="1">F-type ATPases have 2 components, F(1) - the catalytic core - and F(0) - the membrane proton channel. F(1) has five subunits: alpha(3), beta(3), gamma(1), delta(1), epsilon(1). F(0) has four main subunits: a(1), b(1), b'(1) and c(10-14). The alpha and beta chains form an alternating ring which encloses part of the gamma chain. F(1) is attached to F(0) by a central stalk formed by the gamma and epsilon chains, while a peripheral stalk is formed by the delta, b and b' chains.</text>
</comment>
<comment type="subcellular location">
    <subcellularLocation>
        <location evidence="1">Plastid</location>
        <location evidence="1">Chloroplast thylakoid membrane</location>
        <topology evidence="1">Multi-pass membrane protein</topology>
    </subcellularLocation>
</comment>
<comment type="miscellaneous">
    <text>In plastids the F-type ATPase is also known as CF(1)CF(0).</text>
</comment>
<comment type="similarity">
    <text evidence="1">Belongs to the ATPase C chain family.</text>
</comment>